<name>PURL_STAAS</name>
<feature type="chain" id="PRO_0000100489" description="Phosphoribosylformylglycinamidine synthase subunit PurL">
    <location>
        <begin position="1"/>
        <end position="729"/>
    </location>
</feature>
<feature type="active site" evidence="1">
    <location>
        <position position="54"/>
    </location>
</feature>
<feature type="active site" description="Proton acceptor" evidence="1">
    <location>
        <position position="100"/>
    </location>
</feature>
<feature type="binding site" evidence="1">
    <location>
        <position position="57"/>
    </location>
    <ligand>
        <name>ATP</name>
        <dbReference type="ChEBI" id="CHEBI:30616"/>
    </ligand>
</feature>
<feature type="binding site" evidence="1">
    <location>
        <position position="96"/>
    </location>
    <ligand>
        <name>ATP</name>
        <dbReference type="ChEBI" id="CHEBI:30616"/>
    </ligand>
</feature>
<feature type="binding site" evidence="1">
    <location>
        <position position="98"/>
    </location>
    <ligand>
        <name>Mg(2+)</name>
        <dbReference type="ChEBI" id="CHEBI:18420"/>
        <label>1</label>
    </ligand>
</feature>
<feature type="binding site" evidence="1">
    <location>
        <begin position="99"/>
        <end position="102"/>
    </location>
    <ligand>
        <name>substrate</name>
    </ligand>
</feature>
<feature type="binding site" evidence="1">
    <location>
        <position position="121"/>
    </location>
    <ligand>
        <name>substrate</name>
    </ligand>
</feature>
<feature type="binding site" evidence="1">
    <location>
        <position position="122"/>
    </location>
    <ligand>
        <name>Mg(2+)</name>
        <dbReference type="ChEBI" id="CHEBI:18420"/>
        <label>2</label>
    </ligand>
</feature>
<feature type="binding site" evidence="1">
    <location>
        <position position="245"/>
    </location>
    <ligand>
        <name>substrate</name>
    </ligand>
</feature>
<feature type="binding site" evidence="1">
    <location>
        <position position="273"/>
    </location>
    <ligand>
        <name>Mg(2+)</name>
        <dbReference type="ChEBI" id="CHEBI:18420"/>
        <label>2</label>
    </ligand>
</feature>
<feature type="binding site" evidence="1">
    <location>
        <begin position="317"/>
        <end position="319"/>
    </location>
    <ligand>
        <name>substrate</name>
    </ligand>
</feature>
<feature type="binding site" evidence="1">
    <location>
        <position position="495"/>
    </location>
    <ligand>
        <name>ATP</name>
        <dbReference type="ChEBI" id="CHEBI:30616"/>
    </ligand>
</feature>
<feature type="binding site" evidence="1">
    <location>
        <position position="532"/>
    </location>
    <ligand>
        <name>ATP</name>
        <dbReference type="ChEBI" id="CHEBI:30616"/>
    </ligand>
</feature>
<feature type="binding site" evidence="1">
    <location>
        <position position="533"/>
    </location>
    <ligand>
        <name>Mg(2+)</name>
        <dbReference type="ChEBI" id="CHEBI:18420"/>
        <label>1</label>
    </ligand>
</feature>
<feature type="binding site" evidence="1">
    <location>
        <position position="535"/>
    </location>
    <ligand>
        <name>substrate</name>
    </ligand>
</feature>
<organism>
    <name type="scientific">Staphylococcus aureus (strain MSSA476)</name>
    <dbReference type="NCBI Taxonomy" id="282459"/>
    <lineage>
        <taxon>Bacteria</taxon>
        <taxon>Bacillati</taxon>
        <taxon>Bacillota</taxon>
        <taxon>Bacilli</taxon>
        <taxon>Bacillales</taxon>
        <taxon>Staphylococcaceae</taxon>
        <taxon>Staphylococcus</taxon>
    </lineage>
</organism>
<sequence length="729" mass="79536">MSKFIEPSVEEIKLEKVYQDMGLSDQEYEKVCDILGRQPNFTETGIFSVMWSEHCSYKHSKPFLKQFPTSGDHVLMGPGEGAGVVDIGDNQAVVFKVESHNHPSAIEPYQGAATGVGGIIRDIVSIGARPINLLNSLRFGELDNKQNQRLLKGVVKGIGGYGNCIGIPTTAGEIEFDERYDGNPLVNAMCVGVINHDMIQKGTAKGVGNSVIYVGLKTGRDGIHGATFASEELTEESESKRPSVQIGDPFVGKKLMEATLEAITFDELVGIQDMGAAGLTSSSSEMAAKGGSGLHLRLEQVPTREPGISPYEMMLSETQERMLLVVEKGTEQKFLDLFDKHELDSAVIGEVTDTNRFVLTYDDEVYADIPVEPLADEAPVYILEGEEKDYNTSKNDYTHIDVKDTFFKLLKHPTIASKHYLYDQYDQQVGANTIIKPGLQASVVRVEGTNKAIASTIDGEARYVYNNPYEGGKMVVAEAYRNLIAVGATPLAMTDCLNYGSPEKKEIYQQLIDSTKGMAEACDILKTPVVSGNVSLYNETKGTSIFPTPVVGMVGLIENVNYLNDFEPQVGDKLYLIGDTKDDFGGSQLEKLIYGKVNHEFESLDLSSEVEKGESIKTAIREGLLSHVQTVGKGGLLITLAKLSAHYGLGLKSSIDITNAQLFSETQGRYVVSVKSGKTLNIDNAIEIGLLTDSDNFKVTTPYTEISENVSDIKQIWEGAIAQCLTTQD</sequence>
<comment type="function">
    <text evidence="1">Part of the phosphoribosylformylglycinamidine synthase complex involved in the purines biosynthetic pathway. Catalyzes the ATP-dependent conversion of formylglycinamide ribonucleotide (FGAR) and glutamine to yield formylglycinamidine ribonucleotide (FGAM) and glutamate. The FGAM synthase complex is composed of three subunits. PurQ produces an ammonia molecule by converting glutamine to glutamate. PurL transfers the ammonia molecule to FGAR to form FGAM in an ATP-dependent manner. PurS interacts with PurQ and PurL and is thought to assist in the transfer of the ammonia molecule from PurQ to PurL.</text>
</comment>
<comment type="catalytic activity">
    <reaction evidence="1">
        <text>N(2)-formyl-N(1)-(5-phospho-beta-D-ribosyl)glycinamide + L-glutamine + ATP + H2O = 2-formamido-N(1)-(5-O-phospho-beta-D-ribosyl)acetamidine + L-glutamate + ADP + phosphate + H(+)</text>
        <dbReference type="Rhea" id="RHEA:17129"/>
        <dbReference type="ChEBI" id="CHEBI:15377"/>
        <dbReference type="ChEBI" id="CHEBI:15378"/>
        <dbReference type="ChEBI" id="CHEBI:29985"/>
        <dbReference type="ChEBI" id="CHEBI:30616"/>
        <dbReference type="ChEBI" id="CHEBI:43474"/>
        <dbReference type="ChEBI" id="CHEBI:58359"/>
        <dbReference type="ChEBI" id="CHEBI:147286"/>
        <dbReference type="ChEBI" id="CHEBI:147287"/>
        <dbReference type="ChEBI" id="CHEBI:456216"/>
        <dbReference type="EC" id="6.3.5.3"/>
    </reaction>
</comment>
<comment type="pathway">
    <text evidence="1">Purine metabolism; IMP biosynthesis via de novo pathway; 5-amino-1-(5-phospho-D-ribosyl)imidazole from N(2)-formyl-N(1)-(5-phospho-D-ribosyl)glycinamide: step 1/2.</text>
</comment>
<comment type="subunit">
    <text evidence="1">Monomer. Part of the FGAM synthase complex composed of 1 PurL, 1 PurQ and 2 PurS subunits.</text>
</comment>
<comment type="subcellular location">
    <subcellularLocation>
        <location evidence="1">Cytoplasm</location>
    </subcellularLocation>
</comment>
<comment type="similarity">
    <text evidence="1">Belongs to the FGAMS family.</text>
</comment>
<evidence type="ECO:0000255" key="1">
    <source>
        <dbReference type="HAMAP-Rule" id="MF_00420"/>
    </source>
</evidence>
<dbReference type="EC" id="6.3.5.3" evidence="1"/>
<dbReference type="EMBL" id="BX571857">
    <property type="protein sequence ID" value="CAG42779.1"/>
    <property type="molecule type" value="Genomic_DNA"/>
</dbReference>
<dbReference type="RefSeq" id="WP_000032727.1">
    <property type="nucleotide sequence ID" value="NC_002953.3"/>
</dbReference>
<dbReference type="SMR" id="Q6GAE4"/>
<dbReference type="KEGG" id="sas:SAS1005"/>
<dbReference type="HOGENOM" id="CLU_003100_0_1_9"/>
<dbReference type="UniPathway" id="UPA00074">
    <property type="reaction ID" value="UER00128"/>
</dbReference>
<dbReference type="GO" id="GO:0005737">
    <property type="term" value="C:cytoplasm"/>
    <property type="evidence" value="ECO:0007669"/>
    <property type="project" value="UniProtKB-SubCell"/>
</dbReference>
<dbReference type="GO" id="GO:0005524">
    <property type="term" value="F:ATP binding"/>
    <property type="evidence" value="ECO:0007669"/>
    <property type="project" value="UniProtKB-UniRule"/>
</dbReference>
<dbReference type="GO" id="GO:0000287">
    <property type="term" value="F:magnesium ion binding"/>
    <property type="evidence" value="ECO:0007669"/>
    <property type="project" value="UniProtKB-UniRule"/>
</dbReference>
<dbReference type="GO" id="GO:0004642">
    <property type="term" value="F:phosphoribosylformylglycinamidine synthase activity"/>
    <property type="evidence" value="ECO:0007669"/>
    <property type="project" value="UniProtKB-UniRule"/>
</dbReference>
<dbReference type="GO" id="GO:0006189">
    <property type="term" value="P:'de novo' IMP biosynthetic process"/>
    <property type="evidence" value="ECO:0007669"/>
    <property type="project" value="UniProtKB-UniRule"/>
</dbReference>
<dbReference type="CDD" id="cd02203">
    <property type="entry name" value="PurL_repeat1"/>
    <property type="match status" value="1"/>
</dbReference>
<dbReference type="CDD" id="cd02204">
    <property type="entry name" value="PurL_repeat2"/>
    <property type="match status" value="1"/>
</dbReference>
<dbReference type="FunFam" id="3.30.1330.10:FF:000004">
    <property type="entry name" value="Phosphoribosylformylglycinamidine synthase subunit PurL"/>
    <property type="match status" value="1"/>
</dbReference>
<dbReference type="Gene3D" id="3.90.650.10">
    <property type="entry name" value="PurM-like C-terminal domain"/>
    <property type="match status" value="2"/>
</dbReference>
<dbReference type="Gene3D" id="3.30.1330.10">
    <property type="entry name" value="PurM-like, N-terminal domain"/>
    <property type="match status" value="2"/>
</dbReference>
<dbReference type="HAMAP" id="MF_00420">
    <property type="entry name" value="PurL_2"/>
    <property type="match status" value="1"/>
</dbReference>
<dbReference type="InterPro" id="IPR010074">
    <property type="entry name" value="PRibForGlyAmidine_synth_PurL"/>
</dbReference>
<dbReference type="InterPro" id="IPR041609">
    <property type="entry name" value="PurL_linker"/>
</dbReference>
<dbReference type="InterPro" id="IPR010918">
    <property type="entry name" value="PurM-like_C_dom"/>
</dbReference>
<dbReference type="InterPro" id="IPR036676">
    <property type="entry name" value="PurM-like_C_sf"/>
</dbReference>
<dbReference type="InterPro" id="IPR016188">
    <property type="entry name" value="PurM-like_N"/>
</dbReference>
<dbReference type="InterPro" id="IPR036921">
    <property type="entry name" value="PurM-like_N_sf"/>
</dbReference>
<dbReference type="NCBIfam" id="TIGR01736">
    <property type="entry name" value="FGAM_synth_II"/>
    <property type="match status" value="1"/>
</dbReference>
<dbReference type="NCBIfam" id="NF002290">
    <property type="entry name" value="PRK01213.1"/>
    <property type="match status" value="1"/>
</dbReference>
<dbReference type="PANTHER" id="PTHR43555">
    <property type="entry name" value="PHOSPHORIBOSYLFORMYLGLYCINAMIDINE SYNTHASE SUBUNIT PURL"/>
    <property type="match status" value="1"/>
</dbReference>
<dbReference type="PANTHER" id="PTHR43555:SF1">
    <property type="entry name" value="PHOSPHORIBOSYLFORMYLGLYCINAMIDINE SYNTHASE SUBUNIT PURL"/>
    <property type="match status" value="1"/>
</dbReference>
<dbReference type="Pfam" id="PF00586">
    <property type="entry name" value="AIRS"/>
    <property type="match status" value="2"/>
</dbReference>
<dbReference type="Pfam" id="PF02769">
    <property type="entry name" value="AIRS_C"/>
    <property type="match status" value="1"/>
</dbReference>
<dbReference type="Pfam" id="PF18072">
    <property type="entry name" value="FGAR-AT_linker"/>
    <property type="match status" value="1"/>
</dbReference>
<dbReference type="PIRSF" id="PIRSF001587">
    <property type="entry name" value="FGAM_synthase_II"/>
    <property type="match status" value="1"/>
</dbReference>
<dbReference type="SUPFAM" id="SSF56042">
    <property type="entry name" value="PurM C-terminal domain-like"/>
    <property type="match status" value="2"/>
</dbReference>
<dbReference type="SUPFAM" id="SSF55326">
    <property type="entry name" value="PurM N-terminal domain-like"/>
    <property type="match status" value="2"/>
</dbReference>
<keyword id="KW-0067">ATP-binding</keyword>
<keyword id="KW-0963">Cytoplasm</keyword>
<keyword id="KW-0436">Ligase</keyword>
<keyword id="KW-0460">Magnesium</keyword>
<keyword id="KW-0479">Metal-binding</keyword>
<keyword id="KW-0547">Nucleotide-binding</keyword>
<keyword id="KW-0658">Purine biosynthesis</keyword>
<reference key="1">
    <citation type="journal article" date="2004" name="Proc. Natl. Acad. Sci. U.S.A.">
        <title>Complete genomes of two clinical Staphylococcus aureus strains: evidence for the rapid evolution of virulence and drug resistance.</title>
        <authorList>
            <person name="Holden M.T.G."/>
            <person name="Feil E.J."/>
            <person name="Lindsay J.A."/>
            <person name="Peacock S.J."/>
            <person name="Day N.P.J."/>
            <person name="Enright M.C."/>
            <person name="Foster T.J."/>
            <person name="Moore C.E."/>
            <person name="Hurst L."/>
            <person name="Atkin R."/>
            <person name="Barron A."/>
            <person name="Bason N."/>
            <person name="Bentley S.D."/>
            <person name="Chillingworth C."/>
            <person name="Chillingworth T."/>
            <person name="Churcher C."/>
            <person name="Clark L."/>
            <person name="Corton C."/>
            <person name="Cronin A."/>
            <person name="Doggett J."/>
            <person name="Dowd L."/>
            <person name="Feltwell T."/>
            <person name="Hance Z."/>
            <person name="Harris B."/>
            <person name="Hauser H."/>
            <person name="Holroyd S."/>
            <person name="Jagels K."/>
            <person name="James K.D."/>
            <person name="Lennard N."/>
            <person name="Line A."/>
            <person name="Mayes R."/>
            <person name="Moule S."/>
            <person name="Mungall K."/>
            <person name="Ormond D."/>
            <person name="Quail M.A."/>
            <person name="Rabbinowitsch E."/>
            <person name="Rutherford K.M."/>
            <person name="Sanders M."/>
            <person name="Sharp S."/>
            <person name="Simmonds M."/>
            <person name="Stevens K."/>
            <person name="Whitehead S."/>
            <person name="Barrell B.G."/>
            <person name="Spratt B.G."/>
            <person name="Parkhill J."/>
        </authorList>
    </citation>
    <scope>NUCLEOTIDE SEQUENCE [LARGE SCALE GENOMIC DNA]</scope>
    <source>
        <strain>MSSA476</strain>
    </source>
</reference>
<proteinExistence type="inferred from homology"/>
<accession>Q6GAE4</accession>
<gene>
    <name evidence="1" type="primary">purL</name>
    <name type="ordered locus">SAS1005</name>
</gene>
<protein>
    <recommendedName>
        <fullName evidence="1">Phosphoribosylformylglycinamidine synthase subunit PurL</fullName>
        <shortName evidence="1">FGAM synthase</shortName>
        <ecNumber evidence="1">6.3.5.3</ecNumber>
    </recommendedName>
    <alternativeName>
        <fullName evidence="1">Formylglycinamide ribonucleotide amidotransferase subunit II</fullName>
        <shortName evidence="1">FGAR amidotransferase II</shortName>
        <shortName evidence="1">FGAR-AT II</shortName>
    </alternativeName>
    <alternativeName>
        <fullName evidence="1">Glutamine amidotransferase PurL</fullName>
    </alternativeName>
    <alternativeName>
        <fullName evidence="1">Phosphoribosylformylglycinamidine synthase subunit II</fullName>
    </alternativeName>
</protein>